<evidence type="ECO:0000255" key="1">
    <source>
        <dbReference type="HAMAP-Rule" id="MF_04000"/>
    </source>
</evidence>
<evidence type="ECO:0000256" key="2">
    <source>
        <dbReference type="SAM" id="MobiDB-lite"/>
    </source>
</evidence>
<feature type="chain" id="PRO_0000133095" description="Replication protein E1">
    <location>
        <begin position="1"/>
        <end position="609"/>
    </location>
</feature>
<feature type="domain" description="SF3 helicase" evidence="1">
    <location>
        <begin position="398"/>
        <end position="562"/>
    </location>
</feature>
<feature type="region of interest" description="Disordered" evidence="2">
    <location>
        <begin position="84"/>
        <end position="103"/>
    </location>
</feature>
<feature type="region of interest" description="DNA-binding region" evidence="1">
    <location>
        <begin position="146"/>
        <end position="313"/>
    </location>
</feature>
<feature type="short sequence motif" description="Nuclear localization signal" evidence="1">
    <location>
        <begin position="70"/>
        <end position="72"/>
    </location>
</feature>
<feature type="binding site" evidence="1">
    <location>
        <begin position="438"/>
        <end position="445"/>
    </location>
    <ligand>
        <name>ATP</name>
        <dbReference type="ChEBI" id="CHEBI:30616"/>
    </ligand>
</feature>
<feature type="modified residue" description="Phosphoserine; by host" evidence="1">
    <location>
        <position position="76"/>
    </location>
</feature>
<comment type="function">
    <text evidence="1">ATP-dependent DNA 3'-5' helicase required for initiation of viral DNA replication. It forms a complex with the viral E2 protein. The E1-E2 complex binds to the replication origin which contains binding sites for both proteins. During the initial step, a dimer of E1 interacts with a dimer of protein E2 leading to a complex that binds the viral origin of replication with high specificity. Then, a second dimer of E1 displaces the E2 dimer in an ATP-dependent manner to form the E1 tetramer. Following this, two E1 monomers are added to each half of the site, which results in the formation of two E1 trimers on the viral ori. Subsequently, two hexamers will be created. The double hexamer acts as a bi-directional helicase machinery and unwinds the viral DNA and then recruits the host DNA polymerase to start replication.</text>
</comment>
<comment type="catalytic activity">
    <reaction evidence="1">
        <text>Couples ATP hydrolysis with the unwinding of duplex DNA by translocating in the 3'-5' direction.</text>
        <dbReference type="EC" id="5.6.2.4"/>
    </reaction>
</comment>
<comment type="catalytic activity">
    <reaction evidence="1">
        <text>ATP + H2O = ADP + phosphate + H(+)</text>
        <dbReference type="Rhea" id="RHEA:13065"/>
        <dbReference type="ChEBI" id="CHEBI:15377"/>
        <dbReference type="ChEBI" id="CHEBI:15378"/>
        <dbReference type="ChEBI" id="CHEBI:30616"/>
        <dbReference type="ChEBI" id="CHEBI:43474"/>
        <dbReference type="ChEBI" id="CHEBI:456216"/>
        <dbReference type="EC" id="5.6.2.4"/>
    </reaction>
</comment>
<comment type="subunit">
    <text evidence="1">Can form hexamers. Interacts with E2 protein; this interaction increases E1 DNA binding specificity. Interacts with host DNA polymerase subunit POLA2. Interacts with host single stranded DNA-binding protein RPA1. Interacts with host TOP1; this interaction stimulates the enzymatic activity of TOP1.</text>
</comment>
<comment type="subcellular location">
    <subcellularLocation>
        <location evidence="1">Host nucleus</location>
    </subcellularLocation>
</comment>
<comment type="PTM">
    <text evidence="1">Phosphorylated.</text>
</comment>
<comment type="similarity">
    <text evidence="1">Belongs to the papillomaviridae E1 protein family.</text>
</comment>
<organismHost>
    <name type="scientific">Bos taurus</name>
    <name type="common">Bovine</name>
    <dbReference type="NCBI Taxonomy" id="9913"/>
</organismHost>
<sequence>MDPNEKGIEVLSFIDEQAECSGSDSEEGYEESQSDLSDLIDNTECEQGNSAELFAQQEALAVQEHIRASKRKLKLSFRNPLQCITSHSNRTPSRAAPKRRKLDDSGYNEDILGEVAQVDENGGSEGYGSLGSQNVSGRVQVCNVNAANKENDLCGSFLRAGSRRATQLAIFKDKFNISFNSLTRPFKNDKTCCNNWVGAMFGARDELLEASKMLLQRHCDYLMLLMHTCKLGFMALYLLEFKHAKSRETIRHLFQQILQIEKEEMFLEPPKLKSLPAATFWWKISHSASAYIYGELPDWIARQTSLSHQRQDDQPFDLSQMVQWAYDHNYTDEPTIAYNYARMASEDSNAAAFLRCNSQVKFVKECAQMTKYYKTAEMREMSMGKWIKRALDEISGTGDWKDIINFLKYQGINFLSFLASFKDLLHGIPKRNCLVIVGPPNTGKSMFVMSLMKALKGRVLSFVNSKSHFWLQPLNAAKIAVLDDATKATWSYIDTYLRNGLDGTPVSLDMKHRAPIQICFPPLLITTNVQVMKDPLYMYLHSRLMCFEFPNPFPLNEAGQPALILNELSWKSFFARLWRQLDLSDAEDAEDGEPPSPFRCCARSADRHL</sequence>
<organism>
    <name type="scientific">Bos taurus papillomavirus 6</name>
    <name type="common">Bovine papillomavirus 6</name>
    <dbReference type="NCBI Taxonomy" id="10563"/>
    <lineage>
        <taxon>Viruses</taxon>
        <taxon>Monodnaviria</taxon>
        <taxon>Shotokuvirae</taxon>
        <taxon>Cossaviricota</taxon>
        <taxon>Papovaviricetes</taxon>
        <taxon>Zurhausenvirales</taxon>
        <taxon>Papillomaviridae</taxon>
        <taxon>Firstpapillomavirinae</taxon>
        <taxon>Xipapillomavirus</taxon>
        <taxon>Xipapillomavirus 1</taxon>
    </lineage>
</organism>
<proteinExistence type="inferred from homology"/>
<protein>
    <recommendedName>
        <fullName evidence="1">Replication protein E1</fullName>
        <ecNumber evidence="1">5.6.2.4</ecNumber>
    </recommendedName>
    <alternativeName>
        <fullName evidence="1">ATP-dependent helicase E1</fullName>
    </alternativeName>
    <alternativeName>
        <fullName evidence="1">DNA 3'-5' helicase E1</fullName>
    </alternativeName>
</protein>
<dbReference type="EC" id="5.6.2.4" evidence="1"/>
<dbReference type="EMBL" id="AJ620208">
    <property type="protein sequence ID" value="CAF05687.1"/>
    <property type="molecule type" value="Genomic_DNA"/>
</dbReference>
<dbReference type="SMR" id="Q705F4"/>
<dbReference type="Proteomes" id="UP000117755">
    <property type="component" value="Genome"/>
</dbReference>
<dbReference type="GO" id="GO:0042025">
    <property type="term" value="C:host cell nucleus"/>
    <property type="evidence" value="ECO:0007669"/>
    <property type="project" value="UniProtKB-SubCell"/>
</dbReference>
<dbReference type="GO" id="GO:0005524">
    <property type="term" value="F:ATP binding"/>
    <property type="evidence" value="ECO:0007669"/>
    <property type="project" value="UniProtKB-UniRule"/>
</dbReference>
<dbReference type="GO" id="GO:0016887">
    <property type="term" value="F:ATP hydrolysis activity"/>
    <property type="evidence" value="ECO:0007669"/>
    <property type="project" value="RHEA"/>
</dbReference>
<dbReference type="GO" id="GO:0003677">
    <property type="term" value="F:DNA binding"/>
    <property type="evidence" value="ECO:0007669"/>
    <property type="project" value="UniProtKB-UniRule"/>
</dbReference>
<dbReference type="GO" id="GO:0003678">
    <property type="term" value="F:DNA helicase activity"/>
    <property type="evidence" value="ECO:0007669"/>
    <property type="project" value="UniProtKB-UniRule"/>
</dbReference>
<dbReference type="GO" id="GO:0006260">
    <property type="term" value="P:DNA replication"/>
    <property type="evidence" value="ECO:0007669"/>
    <property type="project" value="UniProtKB-UniRule"/>
</dbReference>
<dbReference type="Gene3D" id="3.40.1310.10">
    <property type="match status" value="1"/>
</dbReference>
<dbReference type="Gene3D" id="3.40.50.300">
    <property type="entry name" value="P-loop containing nucleotide triphosphate hydrolases"/>
    <property type="match status" value="1"/>
</dbReference>
<dbReference type="Gene3D" id="1.10.10.510">
    <property type="entry name" value="Zinc finger, large T-antigen D1 domain"/>
    <property type="match status" value="1"/>
</dbReference>
<dbReference type="HAMAP" id="MF_04000">
    <property type="entry name" value="PPV_E1"/>
    <property type="match status" value="1"/>
</dbReference>
<dbReference type="InterPro" id="IPR014015">
    <property type="entry name" value="Helicase_SF3_DNA-vir"/>
</dbReference>
<dbReference type="InterPro" id="IPR027417">
    <property type="entry name" value="P-loop_NTPase"/>
</dbReference>
<dbReference type="InterPro" id="IPR001177">
    <property type="entry name" value="PPV_DNA_helicase_E1_C"/>
</dbReference>
<dbReference type="InterPro" id="IPR014000">
    <property type="entry name" value="PPV_DNA_helicase_E1_N"/>
</dbReference>
<dbReference type="InterPro" id="IPR046832">
    <property type="entry name" value="PPV_E1_DBD"/>
</dbReference>
<dbReference type="InterPro" id="IPR046935">
    <property type="entry name" value="PPV_E1_DBD_sf"/>
</dbReference>
<dbReference type="InterPro" id="IPR016393">
    <property type="entry name" value="Rep_E1_papillomaV"/>
</dbReference>
<dbReference type="InterPro" id="IPR037102">
    <property type="entry name" value="Znf_lg_T-Ag_D1_dom_sf"/>
</dbReference>
<dbReference type="Pfam" id="PF00519">
    <property type="entry name" value="PPV_E1_C"/>
    <property type="match status" value="1"/>
</dbReference>
<dbReference type="Pfam" id="PF20450">
    <property type="entry name" value="PPV_E1_DBD"/>
    <property type="match status" value="1"/>
</dbReference>
<dbReference type="Pfam" id="PF00524">
    <property type="entry name" value="PPV_E1_N"/>
    <property type="match status" value="1"/>
</dbReference>
<dbReference type="PIRSF" id="PIRSF003383">
    <property type="entry name" value="Rep_E1_papillomaV"/>
    <property type="match status" value="1"/>
</dbReference>
<dbReference type="SUPFAM" id="SSF55464">
    <property type="entry name" value="Origin of replication-binding domain, RBD-like"/>
    <property type="match status" value="1"/>
</dbReference>
<dbReference type="SUPFAM" id="SSF52540">
    <property type="entry name" value="P-loop containing nucleoside triphosphate hydrolases"/>
    <property type="match status" value="1"/>
</dbReference>
<dbReference type="PROSITE" id="PS51206">
    <property type="entry name" value="SF3_HELICASE_1"/>
    <property type="match status" value="1"/>
</dbReference>
<accession>Q705F4</accession>
<gene>
    <name evidence="1" type="primary">E1</name>
</gene>
<reference key="1">
    <citation type="submission" date="2004-01" db="EMBL/GenBank/DDBJ databases">
        <title>Sequencing of the complete genomes of BPV 3, BPV 5 and BPV 6.</title>
        <authorList>
            <person name="Delius H."/>
            <person name="de Villiers E.M."/>
        </authorList>
    </citation>
    <scope>NUCLEOTIDE SEQUENCE [GENOMIC DNA]</scope>
</reference>
<keyword id="KW-0067">ATP-binding</keyword>
<keyword id="KW-0235">DNA replication</keyword>
<keyword id="KW-0238">DNA-binding</keyword>
<keyword id="KW-0244">Early protein</keyword>
<keyword id="KW-0347">Helicase</keyword>
<keyword id="KW-1048">Host nucleus</keyword>
<keyword id="KW-0378">Hydrolase</keyword>
<keyword id="KW-0413">Isomerase</keyword>
<keyword id="KW-0547">Nucleotide-binding</keyword>
<keyword id="KW-0597">Phosphoprotein</keyword>
<name>VE1_BPV6</name>